<sequence length="482" mass="53810">MEQTEFKEYIHDNLALVLPKLKENDDLVKNKKMLANGLVFYYLYFSEMTDENKVSEAIKTLIKDEETLTLDQVKKRLDQLDARPVETAKKTIESILNGNCAVFINGLDKAYILTTGKKKTRSLTEPTTEKVVRGPKVAFVEDIDTNLALIRQRTSHPKLITKKIMIGENKLKPAAIMYIEGKAKKSVIKEVKARLKNIQLEDIQDSGTLEELIEDNKYSPFPQIQNTERPDKVSSALFNGRVAILVDSSPFVLLVPVSLGILMQSPDDYYERWISASLIRSLRFASIFITLFLSSIYITLVSFHQGLLPTALAVTISANRENVPFPPIFEALLMEVTIELLREAGLRLPNPLGQTIGLVGGVVIGQAAVEANLVSSILVIVVSVIALASFTVPQYGMGLSFRVLRFISMFSAAILGLYGIILFMLVVYTHLTRQTSFGSPYFSPNGFFSLKNTDDSIIRLPIKNKPKEVNNPNEPKTDSTET</sequence>
<accession>P07868</accession>
<accession>O32195</accession>
<keyword id="KW-1003">Cell membrane</keyword>
<keyword id="KW-0309">Germination</keyword>
<keyword id="KW-0472">Membrane</keyword>
<keyword id="KW-1185">Reference proteome</keyword>
<keyword id="KW-0812">Transmembrane</keyword>
<keyword id="KW-1133">Transmembrane helix</keyword>
<feature type="chain" id="PRO_0000164014" description="Spore germination protein A1">
    <location>
        <begin position="1"/>
        <end position="482"/>
    </location>
</feature>
<feature type="transmembrane region" description="Helical" evidence="1">
    <location>
        <begin position="242"/>
        <end position="262"/>
    </location>
</feature>
<feature type="transmembrane region" description="Helical" evidence="1">
    <location>
        <begin position="284"/>
        <end position="304"/>
    </location>
</feature>
<feature type="transmembrane region" description="Helical" evidence="1">
    <location>
        <begin position="321"/>
        <end position="341"/>
    </location>
</feature>
<feature type="transmembrane region" description="Helical" evidence="1">
    <location>
        <begin position="351"/>
        <end position="371"/>
    </location>
</feature>
<feature type="transmembrane region" description="Helical" evidence="1">
    <location>
        <begin position="373"/>
        <end position="393"/>
    </location>
</feature>
<feature type="transmembrane region" description="Helical" evidence="1">
    <location>
        <begin position="406"/>
        <end position="426"/>
    </location>
</feature>
<feature type="sequence conflict" description="In Ref. 1; AAA22465 and 2; CAA11748." evidence="2" ref="1 2">
    <original>T</original>
    <variation>A</variation>
    <location>
        <position position="299"/>
    </location>
</feature>
<feature type="sequence conflict" description="In Ref. 2; CAA11748." evidence="2" ref="2">
    <original>S</original>
    <variation>P</variation>
    <location>
        <position position="302"/>
    </location>
</feature>
<feature type="sequence conflict" description="In Ref. 1; AAA22465." evidence="2" ref="1">
    <location>
        <begin position="347"/>
        <end position="348"/>
    </location>
</feature>
<dbReference type="EMBL" id="M11918">
    <property type="protein sequence ID" value="AAA22465.1"/>
    <property type="molecule type" value="Genomic_DNA"/>
</dbReference>
<dbReference type="EMBL" id="AJ223978">
    <property type="protein sequence ID" value="CAA11748.1"/>
    <property type="molecule type" value="Genomic_DNA"/>
</dbReference>
<dbReference type="EMBL" id="AL009126">
    <property type="protein sequence ID" value="CAB15295.2"/>
    <property type="molecule type" value="Genomic_DNA"/>
</dbReference>
<dbReference type="EMBL" id="M16189">
    <property type="protein sequence ID" value="AAA92780.1"/>
    <property type="molecule type" value="Genomic_DNA"/>
</dbReference>
<dbReference type="EMBL" id="X01701">
    <property type="protein sequence ID" value="CAA25848.1"/>
    <property type="molecule type" value="Genomic_DNA"/>
</dbReference>
<dbReference type="PIR" id="E69629">
    <property type="entry name" value="E69629"/>
</dbReference>
<dbReference type="RefSeq" id="NP_391185.2">
    <property type="nucleotide sequence ID" value="NC_000964.3"/>
</dbReference>
<dbReference type="RefSeq" id="WP_010886610.1">
    <property type="nucleotide sequence ID" value="NZ_OZ025638.1"/>
</dbReference>
<dbReference type="SMR" id="P07868"/>
<dbReference type="FunCoup" id="P07868">
    <property type="interactions" value="120"/>
</dbReference>
<dbReference type="STRING" id="224308.BSU33050"/>
<dbReference type="TCDB" id="1.A.134.1.1">
    <property type="family name" value="the nutrient-sensing ion-conducting pore-forming-geraa (nip-geraa) family"/>
</dbReference>
<dbReference type="PaxDb" id="224308-BSU33050"/>
<dbReference type="EnsemblBacteria" id="CAB15295">
    <property type="protein sequence ID" value="CAB15295"/>
    <property type="gene ID" value="BSU_33050"/>
</dbReference>
<dbReference type="GeneID" id="935953"/>
<dbReference type="KEGG" id="bsu:BSU33050"/>
<dbReference type="PATRIC" id="fig|224308.43.peg.3462"/>
<dbReference type="eggNOG" id="COG0697">
    <property type="taxonomic scope" value="Bacteria"/>
</dbReference>
<dbReference type="InParanoid" id="P07868"/>
<dbReference type="OrthoDB" id="9772630at2"/>
<dbReference type="PhylomeDB" id="P07868"/>
<dbReference type="BioCyc" id="BSUB:BSU33050-MONOMER"/>
<dbReference type="Proteomes" id="UP000001570">
    <property type="component" value="Chromosome"/>
</dbReference>
<dbReference type="GO" id="GO:0005886">
    <property type="term" value="C:plasma membrane"/>
    <property type="evidence" value="ECO:0007669"/>
    <property type="project" value="UniProtKB-SubCell"/>
</dbReference>
<dbReference type="GO" id="GO:0009847">
    <property type="term" value="P:spore germination"/>
    <property type="evidence" value="ECO:0007669"/>
    <property type="project" value="InterPro"/>
</dbReference>
<dbReference type="InterPro" id="IPR004995">
    <property type="entry name" value="Spore_Ger"/>
</dbReference>
<dbReference type="InterPro" id="IPR050768">
    <property type="entry name" value="UPF0353/GerABKA_families"/>
</dbReference>
<dbReference type="PANTHER" id="PTHR22550:SF5">
    <property type="entry name" value="LEUCINE ZIPPER PROTEIN 4"/>
    <property type="match status" value="1"/>
</dbReference>
<dbReference type="PANTHER" id="PTHR22550">
    <property type="entry name" value="SPORE GERMINATION PROTEIN"/>
    <property type="match status" value="1"/>
</dbReference>
<dbReference type="Pfam" id="PF03323">
    <property type="entry name" value="GerA"/>
    <property type="match status" value="1"/>
</dbReference>
<dbReference type="PIRSF" id="PIRSF005690">
    <property type="entry name" value="GerBA"/>
    <property type="match status" value="1"/>
</dbReference>
<evidence type="ECO:0000255" key="1"/>
<evidence type="ECO:0000305" key="2"/>
<protein>
    <recommendedName>
        <fullName>Spore germination protein A1</fullName>
    </recommendedName>
</protein>
<name>GERAA_BACSU</name>
<proteinExistence type="evidence at transcript level"/>
<organism>
    <name type="scientific">Bacillus subtilis (strain 168)</name>
    <dbReference type="NCBI Taxonomy" id="224308"/>
    <lineage>
        <taxon>Bacteria</taxon>
        <taxon>Bacillati</taxon>
        <taxon>Bacillota</taxon>
        <taxon>Bacilli</taxon>
        <taxon>Bacillales</taxon>
        <taxon>Bacillaceae</taxon>
        <taxon>Bacillus</taxon>
    </lineage>
</organism>
<gene>
    <name type="primary">gerAA</name>
    <name type="synonym">gerA1</name>
    <name type="ordered locus">BSU33050</name>
</gene>
<comment type="function">
    <text>Forms a complex at the inner spore membrane which acts as a receptor for L-alanine, thus is involved in the stimulation of germination in response to alanine. Can stimulate germination in the absence of GerD and GerK gene products (fructose and glucose receptors, respectively), but the response is improved in their presence.</text>
</comment>
<comment type="subcellular location">
    <subcellularLocation>
        <location evidence="2">Cell membrane</location>
        <topology evidence="2">Multi-pass membrane protein</topology>
    </subcellularLocation>
</comment>
<comment type="developmental stage">
    <text>Expressed in the forespore compartment of the developing sporangium.</text>
</comment>
<comment type="similarity">
    <text evidence="2">Belongs to the GerABKA family.</text>
</comment>
<reference key="1">
    <citation type="journal article" date="1985" name="Gene">
        <title>The nucleotide sequence of a spore germination gene (gerA) of Bacillus subtilis 168.</title>
        <authorList>
            <person name="Feavers I.M."/>
            <person name="Miles J.S."/>
            <person name="Moir A."/>
        </authorList>
    </citation>
    <scope>NUCLEOTIDE SEQUENCE [GENOMIC DNA]</scope>
    <source>
        <strain>168</strain>
    </source>
</reference>
<reference key="2">
    <citation type="journal article" date="1998" name="Microbiology">
        <title>The yvsA-yvqA (293 degrees - 289 degrees) region of the Bacillus subtilis chromosome containing genes involved in metal ion uptake and a putative sigma factor.</title>
        <authorList>
            <person name="Wipat A."/>
            <person name="Brignell C.S."/>
            <person name="Guy J.B."/>
            <person name="Rose M."/>
            <person name="Emmerson P.T."/>
            <person name="Harwood C.R."/>
        </authorList>
    </citation>
    <scope>NUCLEOTIDE SEQUENCE [GENOMIC DNA]</scope>
    <source>
        <strain>168</strain>
    </source>
</reference>
<reference key="3">
    <citation type="journal article" date="1997" name="Nature">
        <title>The complete genome sequence of the Gram-positive bacterium Bacillus subtilis.</title>
        <authorList>
            <person name="Kunst F."/>
            <person name="Ogasawara N."/>
            <person name="Moszer I."/>
            <person name="Albertini A.M."/>
            <person name="Alloni G."/>
            <person name="Azevedo V."/>
            <person name="Bertero M.G."/>
            <person name="Bessieres P."/>
            <person name="Bolotin A."/>
            <person name="Borchert S."/>
            <person name="Borriss R."/>
            <person name="Boursier L."/>
            <person name="Brans A."/>
            <person name="Braun M."/>
            <person name="Brignell S.C."/>
            <person name="Bron S."/>
            <person name="Brouillet S."/>
            <person name="Bruschi C.V."/>
            <person name="Caldwell B."/>
            <person name="Capuano V."/>
            <person name="Carter N.M."/>
            <person name="Choi S.-K."/>
            <person name="Codani J.-J."/>
            <person name="Connerton I.F."/>
            <person name="Cummings N.J."/>
            <person name="Daniel R.A."/>
            <person name="Denizot F."/>
            <person name="Devine K.M."/>
            <person name="Duesterhoeft A."/>
            <person name="Ehrlich S.D."/>
            <person name="Emmerson P.T."/>
            <person name="Entian K.-D."/>
            <person name="Errington J."/>
            <person name="Fabret C."/>
            <person name="Ferrari E."/>
            <person name="Foulger D."/>
            <person name="Fritz C."/>
            <person name="Fujita M."/>
            <person name="Fujita Y."/>
            <person name="Fuma S."/>
            <person name="Galizzi A."/>
            <person name="Galleron N."/>
            <person name="Ghim S.-Y."/>
            <person name="Glaser P."/>
            <person name="Goffeau A."/>
            <person name="Golightly E.J."/>
            <person name="Grandi G."/>
            <person name="Guiseppi G."/>
            <person name="Guy B.J."/>
            <person name="Haga K."/>
            <person name="Haiech J."/>
            <person name="Harwood C.R."/>
            <person name="Henaut A."/>
            <person name="Hilbert H."/>
            <person name="Holsappel S."/>
            <person name="Hosono S."/>
            <person name="Hullo M.-F."/>
            <person name="Itaya M."/>
            <person name="Jones L.-M."/>
            <person name="Joris B."/>
            <person name="Karamata D."/>
            <person name="Kasahara Y."/>
            <person name="Klaerr-Blanchard M."/>
            <person name="Klein C."/>
            <person name="Kobayashi Y."/>
            <person name="Koetter P."/>
            <person name="Koningstein G."/>
            <person name="Krogh S."/>
            <person name="Kumano M."/>
            <person name="Kurita K."/>
            <person name="Lapidus A."/>
            <person name="Lardinois S."/>
            <person name="Lauber J."/>
            <person name="Lazarevic V."/>
            <person name="Lee S.-M."/>
            <person name="Levine A."/>
            <person name="Liu H."/>
            <person name="Masuda S."/>
            <person name="Mauel C."/>
            <person name="Medigue C."/>
            <person name="Medina N."/>
            <person name="Mellado R.P."/>
            <person name="Mizuno M."/>
            <person name="Moestl D."/>
            <person name="Nakai S."/>
            <person name="Noback M."/>
            <person name="Noone D."/>
            <person name="O'Reilly M."/>
            <person name="Ogawa K."/>
            <person name="Ogiwara A."/>
            <person name="Oudega B."/>
            <person name="Park S.-H."/>
            <person name="Parro V."/>
            <person name="Pohl T.M."/>
            <person name="Portetelle D."/>
            <person name="Porwollik S."/>
            <person name="Prescott A.M."/>
            <person name="Presecan E."/>
            <person name="Pujic P."/>
            <person name="Purnelle B."/>
            <person name="Rapoport G."/>
            <person name="Rey M."/>
            <person name="Reynolds S."/>
            <person name="Rieger M."/>
            <person name="Rivolta C."/>
            <person name="Rocha E."/>
            <person name="Roche B."/>
            <person name="Rose M."/>
            <person name="Sadaie Y."/>
            <person name="Sato T."/>
            <person name="Scanlan E."/>
            <person name="Schleich S."/>
            <person name="Schroeter R."/>
            <person name="Scoffone F."/>
            <person name="Sekiguchi J."/>
            <person name="Sekowska A."/>
            <person name="Seror S.J."/>
            <person name="Serror P."/>
            <person name="Shin B.-S."/>
            <person name="Soldo B."/>
            <person name="Sorokin A."/>
            <person name="Tacconi E."/>
            <person name="Takagi T."/>
            <person name="Takahashi H."/>
            <person name="Takemaru K."/>
            <person name="Takeuchi M."/>
            <person name="Tamakoshi A."/>
            <person name="Tanaka T."/>
            <person name="Terpstra P."/>
            <person name="Tognoni A."/>
            <person name="Tosato V."/>
            <person name="Uchiyama S."/>
            <person name="Vandenbol M."/>
            <person name="Vannier F."/>
            <person name="Vassarotti A."/>
            <person name="Viari A."/>
            <person name="Wambutt R."/>
            <person name="Wedler E."/>
            <person name="Wedler H."/>
            <person name="Weitzenegger T."/>
            <person name="Winters P."/>
            <person name="Wipat A."/>
            <person name="Yamamoto H."/>
            <person name="Yamane K."/>
            <person name="Yasumoto K."/>
            <person name="Yata K."/>
            <person name="Yoshida K."/>
            <person name="Yoshikawa H.-F."/>
            <person name="Zumstein E."/>
            <person name="Yoshikawa H."/>
            <person name="Danchin A."/>
        </authorList>
    </citation>
    <scope>NUCLEOTIDE SEQUENCE [LARGE SCALE GENOMIC DNA]</scope>
    <source>
        <strain>168</strain>
    </source>
</reference>
<reference key="4">
    <citation type="journal article" date="2009" name="Microbiology">
        <title>From a consortium sequence to a unified sequence: the Bacillus subtilis 168 reference genome a decade later.</title>
        <authorList>
            <person name="Barbe V."/>
            <person name="Cruveiller S."/>
            <person name="Kunst F."/>
            <person name="Lenoble P."/>
            <person name="Meurice G."/>
            <person name="Sekowska A."/>
            <person name="Vallenet D."/>
            <person name="Wang T."/>
            <person name="Moszer I."/>
            <person name="Medigue C."/>
            <person name="Danchin A."/>
        </authorList>
    </citation>
    <scope>SEQUENCE REVISION TO 299 AND 302</scope>
</reference>
<reference key="5">
    <citation type="journal article" date="1987" name="Gene">
        <title>The nucleotide sequence and gene organization of the gerA spore germination operon of Bacillus subtilis 168.</title>
        <authorList>
            <person name="Zuberi A.R."/>
            <person name="Moir A."/>
            <person name="Feavers I.M."/>
        </authorList>
    </citation>
    <scope>NUCLEOTIDE SEQUENCE [GENOMIC DNA] OF 466-482</scope>
    <source>
        <strain>168</strain>
    </source>
</reference>
<reference key="6">
    <citation type="journal article" date="1985" name="Nucleic Acids Res.">
        <title>Complete nucleotide sequence of the fumarase gene (citG) of Bacillus subtilis 168.</title>
        <authorList>
            <person name="Miles J.S."/>
            <person name="Guest J.R."/>
        </authorList>
    </citation>
    <scope>NUCLEOTIDE SEQUENCE [GENOMIC DNA] OF 1-26</scope>
    <source>
        <strain>168</strain>
    </source>
</reference>